<dbReference type="EMBL" id="EF613243">
    <property type="protein sequence ID" value="ABU88478.1"/>
    <property type="molecule type" value="mRNA"/>
</dbReference>
<dbReference type="EMBL" id="EF613244">
    <property type="protein sequence ID" value="ABU88479.1"/>
    <property type="molecule type" value="mRNA"/>
</dbReference>
<dbReference type="EMBL" id="EF613245">
    <property type="protein sequence ID" value="ABU88480.1"/>
    <property type="molecule type" value="mRNA"/>
</dbReference>
<dbReference type="EMBL" id="EF613246">
    <property type="protein sequence ID" value="ABU88481.1"/>
    <property type="molecule type" value="mRNA"/>
</dbReference>
<dbReference type="EMBL" id="EF613247">
    <property type="protein sequence ID" value="ABU88482.1"/>
    <property type="molecule type" value="mRNA"/>
</dbReference>
<dbReference type="EMBL" id="EF613248">
    <property type="protein sequence ID" value="ABU88483.1"/>
    <property type="molecule type" value="mRNA"/>
</dbReference>
<dbReference type="EMBL" id="EF613249">
    <property type="protein sequence ID" value="ABU88484.1"/>
    <property type="molecule type" value="mRNA"/>
</dbReference>
<dbReference type="EMBL" id="EF613250">
    <property type="protein sequence ID" value="ABU88485.1"/>
    <property type="molecule type" value="mRNA"/>
</dbReference>
<dbReference type="EMBL" id="EF613251">
    <property type="protein sequence ID" value="ABU88486.1"/>
    <property type="molecule type" value="mRNA"/>
</dbReference>
<dbReference type="EMBL" id="EF613252">
    <property type="protein sequence ID" value="ABU88487.1"/>
    <property type="molecule type" value="mRNA"/>
</dbReference>
<dbReference type="EMBL" id="EF613253">
    <property type="protein sequence ID" value="ABU88488.1"/>
    <property type="molecule type" value="mRNA"/>
</dbReference>
<dbReference type="EMBL" id="EF613254">
    <property type="protein sequence ID" value="ABU88489.1"/>
    <property type="molecule type" value="mRNA"/>
</dbReference>
<dbReference type="EMBL" id="EF613255">
    <property type="protein sequence ID" value="ABU88490.1"/>
    <property type="molecule type" value="mRNA"/>
</dbReference>
<dbReference type="EMBL" id="EF613256">
    <property type="protein sequence ID" value="ABU88491.1"/>
    <property type="molecule type" value="mRNA"/>
</dbReference>
<dbReference type="EMBL" id="EF613257">
    <property type="protein sequence ID" value="ABU88492.1"/>
    <property type="molecule type" value="mRNA"/>
</dbReference>
<dbReference type="EMBL" id="EF613258">
    <property type="protein sequence ID" value="ABU88493.1"/>
    <property type="molecule type" value="mRNA"/>
</dbReference>
<dbReference type="EMBL" id="EF613259">
    <property type="protein sequence ID" value="ABU88494.1"/>
    <property type="molecule type" value="mRNA"/>
</dbReference>
<dbReference type="GO" id="GO:0005576">
    <property type="term" value="C:extracellular region"/>
    <property type="evidence" value="ECO:0007669"/>
    <property type="project" value="UniProtKB-SubCell"/>
</dbReference>
<dbReference type="GO" id="GO:0042742">
    <property type="term" value="P:defense response to bacterium"/>
    <property type="evidence" value="ECO:0007669"/>
    <property type="project" value="UniProtKB-KW"/>
</dbReference>
<dbReference type="GO" id="GO:0031640">
    <property type="term" value="P:killing of cells of another organism"/>
    <property type="evidence" value="ECO:0007669"/>
    <property type="project" value="UniProtKB-KW"/>
</dbReference>
<dbReference type="InterPro" id="IPR018247">
    <property type="entry name" value="EF_Hand_1_Ca_BS"/>
</dbReference>
<dbReference type="InterPro" id="IPR004275">
    <property type="entry name" value="Frog_antimicrobial_propeptide"/>
</dbReference>
<dbReference type="Pfam" id="PF03032">
    <property type="entry name" value="FSAP_sig_propep"/>
    <property type="match status" value="1"/>
</dbReference>
<name>PLEA1_NIDPL</name>
<evidence type="ECO:0000255" key="1"/>
<evidence type="ECO:0000269" key="2">
    <source>
    </source>
</evidence>
<evidence type="ECO:0000305" key="3"/>
<reference key="1">
    <citation type="journal article" date="2007" name="Peptides">
        <title>A new family of antimicrobial peptides from skin secretions of Rana pleuraden.</title>
        <authorList>
            <person name="Wang X."/>
            <person name="Song Y."/>
            <person name="Li J."/>
            <person name="Liu H."/>
            <person name="Xu X."/>
            <person name="Lai R."/>
            <person name="Zhang K."/>
        </authorList>
    </citation>
    <scope>NUCLEOTIDE SEQUENCE [MRNA]</scope>
    <scope>PROTEIN SEQUENCE OF 44-69</scope>
    <scope>FUNCTION</scope>
    <scope>SUBCELLULAR LOCATION</scope>
    <scope>TISSUE SPECIFICITY</scope>
    <scope>MASS SPECTROMETRY</scope>
    <scope>VARIANT SER-7</scope>
    <source>
        <tissue>Skin</tissue>
        <tissue>Skin secretion</tissue>
    </source>
</reference>
<keyword id="KW-0878">Amphibian defense peptide</keyword>
<keyword id="KW-0044">Antibiotic</keyword>
<keyword id="KW-0929">Antimicrobial</keyword>
<keyword id="KW-0165">Cleavage on pair of basic residues</keyword>
<keyword id="KW-0204">Cytolysis</keyword>
<keyword id="KW-0903">Direct protein sequencing</keyword>
<keyword id="KW-1015">Disulfide bond</keyword>
<keyword id="KW-0354">Hemolysis</keyword>
<keyword id="KW-0964">Secreted</keyword>
<keyword id="KW-0732">Signal</keyword>
<feature type="signal peptide" evidence="1">
    <location>
        <begin position="1"/>
        <end position="18"/>
    </location>
</feature>
<feature type="propeptide" id="PRO_0000313998" evidence="2">
    <location>
        <begin position="19"/>
        <end position="43"/>
    </location>
</feature>
<feature type="peptide" id="PRO_0000313999" description="Pleurain-A1">
    <location>
        <begin position="44"/>
        <end position="69"/>
    </location>
</feature>
<feature type="disulfide bond">
    <location>
        <begin position="63"/>
        <end position="69"/>
    </location>
</feature>
<feature type="sequence variant" evidence="2">
    <original>T</original>
    <variation>S</variation>
    <location>
        <position position="7"/>
    </location>
</feature>
<feature type="sequence conflict" description="In Ref. 1; ABU88487." evidence="3" ref="1">
    <original>T</original>
    <variation>P</variation>
    <location>
        <position position="3"/>
    </location>
</feature>
<feature type="sequence conflict" description="In Ref. 1; ABU88481." evidence="3" ref="1">
    <original>T</original>
    <variation>I</variation>
    <location>
        <position position="7"/>
    </location>
</feature>
<feature type="sequence conflict" description="In Ref. 1; ABU88478." evidence="3" ref="1">
    <original>L</original>
    <variation>S</variation>
    <location>
        <position position="9"/>
    </location>
</feature>
<feature type="sequence conflict" description="In Ref. 1; ABU88493." evidence="3" ref="1">
    <original>F</original>
    <variation>V</variation>
    <location>
        <position position="13"/>
    </location>
</feature>
<feature type="sequence conflict" description="In Ref. 1; ABU88493." evidence="3" ref="1">
    <original>C</original>
    <variation>R</variation>
    <location>
        <position position="22"/>
    </location>
</feature>
<feature type="sequence conflict" description="In Ref. 1; ABU88482." evidence="3" ref="1">
    <original>R</original>
    <variation>G</variation>
    <location>
        <position position="26"/>
    </location>
</feature>
<feature type="sequence conflict" description="In Ref. 1; ABU88488." evidence="3" ref="1">
    <original>D</original>
    <variation>V</variation>
    <location>
        <position position="27"/>
    </location>
</feature>
<feature type="sequence conflict" description="In Ref. 1; ABU88493." evidence="3" ref="1">
    <original>G</original>
    <variation>E</variation>
    <location>
        <position position="33"/>
    </location>
</feature>
<sequence>MFTLKKTLLLLFFLGTISISLCKQERDADEDDGRKMTEEEVKRSIITMTKEAKLPQLWKQIACRLYNTC</sequence>
<accession>A8DY01</accession>
<accession>A8DY00</accession>
<accession>A8DY02</accession>
<accession>A8DY03</accession>
<accession>A8DY04</accession>
<accession>A8DY09</accession>
<accession>A8DY10</accession>
<accession>A8DY15</accession>
<protein>
    <recommendedName>
        <fullName>Pleurain-A1</fullName>
    </recommendedName>
</protein>
<comment type="function">
    <text evidence="2">Antimicrobial peptide. Has activity against the Gram-positive bacterium S.aureus ATCC2592 (MIC=15 ug/ml), the Gram-negative bacteria E.coli ATCC25922 (MIC=60 ug/ml), B.dysenteriae (MIC=120 ug/ml), H.pylori NTCT11637 (MIC=30 ug/ml), and the fungus C.albicans ATCC2002 (MIC=30 ug/ml). Has little hemolytic activity on rabbit red blood cells.</text>
</comment>
<comment type="subcellular location">
    <subcellularLocation>
        <location evidence="2">Secreted</location>
    </subcellularLocation>
</comment>
<comment type="tissue specificity">
    <text evidence="2">Expressed by the skin glands.</text>
</comment>
<comment type="mass spectrometry"/>
<comment type="similarity">
    <text evidence="3">Belongs to the frog skin active peptide (FSAP) family. Pleurain subfamily.</text>
</comment>
<organism>
    <name type="scientific">Nidirana pleuraden</name>
    <name type="common">Yunnan pond frog</name>
    <name type="synonym">Babina pleuraden</name>
    <dbReference type="NCBI Taxonomy" id="369511"/>
    <lineage>
        <taxon>Eukaryota</taxon>
        <taxon>Metazoa</taxon>
        <taxon>Chordata</taxon>
        <taxon>Craniata</taxon>
        <taxon>Vertebrata</taxon>
        <taxon>Euteleostomi</taxon>
        <taxon>Amphibia</taxon>
        <taxon>Batrachia</taxon>
        <taxon>Anura</taxon>
        <taxon>Neobatrachia</taxon>
        <taxon>Ranoidea</taxon>
        <taxon>Ranidae</taxon>
        <taxon>Nidirana</taxon>
    </lineage>
</organism>
<proteinExistence type="evidence at protein level"/>